<sequence length="729" mass="80841">MKIESLDLPDEVKQFYLNSGIMELYPPQAEAVEKGLLEGRNLLAAIPTASGKTLLAELAMLKSILAGGKALYIVPLRALASEKFRRFREFSELGIRVGISTGDYDLRDEGLGVNDIIVATSEKTDSLLRNETVWMQEISVVVADEVHLIDSPDRGPTLEVTLAKLRKMNPSCQILALSATVGNADELAVWLEAELVVSEWRPTELLEGVFFNGTFYCKDREKTVEQSTKDEAVNLALDTLKKDGQCLVFESSRKNCMAFAKKAASTVKKTLSAEDRNALAGIADEILENSETDTSTNLAVCIRSGTAFHHAGLTTPLRELVEDGFRAGRIKLISSTPTLAAGLNLPARRVIIRNYRRYSSEDGMQPIPVLEYKQMAGRAGRPRLDPYGEAVLVAKSYKEFVFLFENYIEANAEDIWSKLGTENALRTHVLSTISNGFARTYDELMDFLEATFFAFQYSNFGLSTVVNECLNFLRQEGMLEKDDALIPTSFGKLVSRLYIDPLSAARIAKGLKGAKSLSELTLLHLVCSTPDMRLLYMRSHDYQDINDYVMAHASEFVKVPSPFDTTEYEWFLGEVKTSLLLLDWIHEKSENEICLKFGTGEGDIHSIADIAEWIMHVTSQLAGLLDLKGAREAAELEKRIHYGAAPELIDLLNIRGIGRVRARKLYEAGFKSSAELAEVDPEKVAALLGPKIADRIFKQIRGRGTSSGIIASEPPEKSPYSGQKTISDY</sequence>
<name>HELS_METBF</name>
<accession>Q465R3</accession>
<keyword id="KW-0067">ATP-binding</keyword>
<keyword id="KW-0227">DNA damage</keyword>
<keyword id="KW-0234">DNA repair</keyword>
<keyword id="KW-0238">DNA-binding</keyword>
<keyword id="KW-0347">Helicase</keyword>
<keyword id="KW-0378">Hydrolase</keyword>
<keyword id="KW-0413">Isomerase</keyword>
<keyword id="KW-0547">Nucleotide-binding</keyword>
<organism>
    <name type="scientific">Methanosarcina barkeri (strain Fusaro / DSM 804)</name>
    <dbReference type="NCBI Taxonomy" id="269797"/>
    <lineage>
        <taxon>Archaea</taxon>
        <taxon>Methanobacteriati</taxon>
        <taxon>Methanobacteriota</taxon>
        <taxon>Stenosarchaea group</taxon>
        <taxon>Methanomicrobia</taxon>
        <taxon>Methanosarcinales</taxon>
        <taxon>Methanosarcinaceae</taxon>
        <taxon>Methanosarcina</taxon>
    </lineage>
</organism>
<gene>
    <name evidence="1" type="primary">hel308</name>
    <name type="ordered locus">Mbar_A3508</name>
</gene>
<reference key="1">
    <citation type="journal article" date="2006" name="J. Bacteriol.">
        <title>The Methanosarcina barkeri genome: comparative analysis with Methanosarcina acetivorans and Methanosarcina mazei reveals extensive rearrangement within methanosarcinal genomes.</title>
        <authorList>
            <person name="Maeder D.L."/>
            <person name="Anderson I."/>
            <person name="Brettin T.S."/>
            <person name="Bruce D.C."/>
            <person name="Gilna P."/>
            <person name="Han C.S."/>
            <person name="Lapidus A."/>
            <person name="Metcalf W.W."/>
            <person name="Saunders E."/>
            <person name="Tapia R."/>
            <person name="Sowers K.R."/>
        </authorList>
    </citation>
    <scope>NUCLEOTIDE SEQUENCE [LARGE SCALE GENOMIC DNA]</scope>
    <source>
        <strain>Fusaro / DSM 804</strain>
    </source>
</reference>
<evidence type="ECO:0000255" key="1">
    <source>
        <dbReference type="HAMAP-Rule" id="MF_00442"/>
    </source>
</evidence>
<evidence type="ECO:0000256" key="2">
    <source>
        <dbReference type="SAM" id="MobiDB-lite"/>
    </source>
</evidence>
<protein>
    <recommendedName>
        <fullName evidence="1">ATP-dependent DNA helicase Hel308</fullName>
        <ecNumber evidence="1">5.6.2.4</ecNumber>
    </recommendedName>
    <alternativeName>
        <fullName evidence="1">DNA 3'-5' helicase Hel308</fullName>
    </alternativeName>
</protein>
<proteinExistence type="inferred from homology"/>
<dbReference type="EC" id="5.6.2.4" evidence="1"/>
<dbReference type="EMBL" id="CP000099">
    <property type="protein sequence ID" value="AAZ72379.1"/>
    <property type="molecule type" value="Genomic_DNA"/>
</dbReference>
<dbReference type="SMR" id="Q465R3"/>
<dbReference type="STRING" id="269797.Mbar_A3508"/>
<dbReference type="PaxDb" id="269797-Mbar_A3508"/>
<dbReference type="KEGG" id="mba:Mbar_A3508"/>
<dbReference type="eggNOG" id="arCOG00553">
    <property type="taxonomic scope" value="Archaea"/>
</dbReference>
<dbReference type="HOGENOM" id="CLU_006553_3_0_2"/>
<dbReference type="OrthoDB" id="371946at2157"/>
<dbReference type="GO" id="GO:0043138">
    <property type="term" value="F:3'-5' DNA helicase activity"/>
    <property type="evidence" value="ECO:0007669"/>
    <property type="project" value="UniProtKB-UniRule"/>
</dbReference>
<dbReference type="GO" id="GO:0005524">
    <property type="term" value="F:ATP binding"/>
    <property type="evidence" value="ECO:0007669"/>
    <property type="project" value="UniProtKB-UniRule"/>
</dbReference>
<dbReference type="GO" id="GO:0016887">
    <property type="term" value="F:ATP hydrolysis activity"/>
    <property type="evidence" value="ECO:0007669"/>
    <property type="project" value="RHEA"/>
</dbReference>
<dbReference type="GO" id="GO:0003677">
    <property type="term" value="F:DNA binding"/>
    <property type="evidence" value="ECO:0007669"/>
    <property type="project" value="UniProtKB-UniRule"/>
</dbReference>
<dbReference type="GO" id="GO:0006281">
    <property type="term" value="P:DNA repair"/>
    <property type="evidence" value="ECO:0007669"/>
    <property type="project" value="UniProtKB-UniRule"/>
</dbReference>
<dbReference type="CDD" id="cd18028">
    <property type="entry name" value="DEXHc_archSki2"/>
    <property type="match status" value="1"/>
</dbReference>
<dbReference type="CDD" id="cd18795">
    <property type="entry name" value="SF2_C_Ski2"/>
    <property type="match status" value="1"/>
</dbReference>
<dbReference type="Gene3D" id="1.10.3380.30">
    <property type="match status" value="1"/>
</dbReference>
<dbReference type="Gene3D" id="1.10.150.20">
    <property type="entry name" value="5' to 3' exonuclease, C-terminal subdomain"/>
    <property type="match status" value="1"/>
</dbReference>
<dbReference type="Gene3D" id="3.40.50.300">
    <property type="entry name" value="P-loop containing nucleotide triphosphate hydrolases"/>
    <property type="match status" value="2"/>
</dbReference>
<dbReference type="HAMAP" id="MF_00442">
    <property type="entry name" value="Helicase_Hel308"/>
    <property type="match status" value="1"/>
</dbReference>
<dbReference type="InterPro" id="IPR011545">
    <property type="entry name" value="DEAD/DEAH_box_helicase_dom"/>
</dbReference>
<dbReference type="InterPro" id="IPR048772">
    <property type="entry name" value="Hel308-like_dom4"/>
</dbReference>
<dbReference type="InterPro" id="IPR050474">
    <property type="entry name" value="Hel308_SKI2-like"/>
</dbReference>
<dbReference type="InterPro" id="IPR014001">
    <property type="entry name" value="Helicase_ATP-bd"/>
</dbReference>
<dbReference type="InterPro" id="IPR001650">
    <property type="entry name" value="Helicase_C-like"/>
</dbReference>
<dbReference type="InterPro" id="IPR022965">
    <property type="entry name" value="Helicase_Hel308"/>
</dbReference>
<dbReference type="InterPro" id="IPR046931">
    <property type="entry name" value="HTH_61"/>
</dbReference>
<dbReference type="InterPro" id="IPR027417">
    <property type="entry name" value="P-loop_NTPase"/>
</dbReference>
<dbReference type="InterPro" id="IPR036390">
    <property type="entry name" value="WH_DNA-bd_sf"/>
</dbReference>
<dbReference type="NCBIfam" id="NF002654">
    <property type="entry name" value="PRK02362.1"/>
    <property type="match status" value="1"/>
</dbReference>
<dbReference type="PANTHER" id="PTHR47961:SF10">
    <property type="entry name" value="ATP-DEPENDENT DNA HELICASE HEL308"/>
    <property type="match status" value="1"/>
</dbReference>
<dbReference type="PANTHER" id="PTHR47961">
    <property type="entry name" value="DNA POLYMERASE THETA, PUTATIVE (AFU_ORTHOLOGUE AFUA_1G05260)-RELATED"/>
    <property type="match status" value="1"/>
</dbReference>
<dbReference type="Pfam" id="PF00270">
    <property type="entry name" value="DEAD"/>
    <property type="match status" value="1"/>
</dbReference>
<dbReference type="Pfam" id="PF00271">
    <property type="entry name" value="Helicase_C"/>
    <property type="match status" value="1"/>
</dbReference>
<dbReference type="Pfam" id="PF21280">
    <property type="entry name" value="Helicase_dom4_arc"/>
    <property type="match status" value="1"/>
</dbReference>
<dbReference type="Pfam" id="PF14520">
    <property type="entry name" value="HHH_5"/>
    <property type="match status" value="1"/>
</dbReference>
<dbReference type="Pfam" id="PF20470">
    <property type="entry name" value="HTH_61"/>
    <property type="match status" value="1"/>
</dbReference>
<dbReference type="SMART" id="SM00487">
    <property type="entry name" value="DEXDc"/>
    <property type="match status" value="1"/>
</dbReference>
<dbReference type="SMART" id="SM00490">
    <property type="entry name" value="HELICc"/>
    <property type="match status" value="1"/>
</dbReference>
<dbReference type="SUPFAM" id="SSF52540">
    <property type="entry name" value="P-loop containing nucleoside triphosphate hydrolases"/>
    <property type="match status" value="2"/>
</dbReference>
<dbReference type="SUPFAM" id="SSF158702">
    <property type="entry name" value="Sec63 N-terminal domain-like"/>
    <property type="match status" value="1"/>
</dbReference>
<dbReference type="SUPFAM" id="SSF46785">
    <property type="entry name" value="Winged helix' DNA-binding domain"/>
    <property type="match status" value="1"/>
</dbReference>
<dbReference type="PROSITE" id="PS51192">
    <property type="entry name" value="HELICASE_ATP_BIND_1"/>
    <property type="match status" value="1"/>
</dbReference>
<dbReference type="PROSITE" id="PS51194">
    <property type="entry name" value="HELICASE_CTER"/>
    <property type="match status" value="1"/>
</dbReference>
<feature type="chain" id="PRO_1000124582" description="ATP-dependent DNA helicase Hel308">
    <location>
        <begin position="1"/>
        <end position="729"/>
    </location>
</feature>
<feature type="domain" description="Helicase ATP-binding" evidence="1">
    <location>
        <begin position="33"/>
        <end position="199"/>
    </location>
</feature>
<feature type="domain" description="Helicase C-terminal" evidence="1">
    <location>
        <begin position="232"/>
        <end position="426"/>
    </location>
</feature>
<feature type="region of interest" description="Disordered" evidence="2">
    <location>
        <begin position="706"/>
        <end position="729"/>
    </location>
</feature>
<feature type="short sequence motif" description="DEAH box" evidence="1">
    <location>
        <begin position="144"/>
        <end position="147"/>
    </location>
</feature>
<feature type="compositionally biased region" description="Polar residues" evidence="2">
    <location>
        <begin position="720"/>
        <end position="729"/>
    </location>
</feature>
<feature type="binding site" evidence="1">
    <location>
        <position position="28"/>
    </location>
    <ligand>
        <name>ATP</name>
        <dbReference type="ChEBI" id="CHEBI:30616"/>
    </ligand>
</feature>
<feature type="binding site" evidence="1">
    <location>
        <begin position="46"/>
        <end position="53"/>
    </location>
    <ligand>
        <name>ATP</name>
        <dbReference type="ChEBI" id="CHEBI:30616"/>
    </ligand>
</feature>
<comment type="function">
    <text evidence="1">DNA-dependent ATPase and 3'-5' DNA helicase that may be involved in repair of stalled replication forks.</text>
</comment>
<comment type="catalytic activity">
    <reaction evidence="1">
        <text>Couples ATP hydrolysis with the unwinding of duplex DNA by translocating in the 3'-5' direction.</text>
        <dbReference type="EC" id="5.6.2.4"/>
    </reaction>
</comment>
<comment type="catalytic activity">
    <reaction evidence="1">
        <text>ATP + H2O = ADP + phosphate + H(+)</text>
        <dbReference type="Rhea" id="RHEA:13065"/>
        <dbReference type="ChEBI" id="CHEBI:15377"/>
        <dbReference type="ChEBI" id="CHEBI:15378"/>
        <dbReference type="ChEBI" id="CHEBI:30616"/>
        <dbReference type="ChEBI" id="CHEBI:43474"/>
        <dbReference type="ChEBI" id="CHEBI:456216"/>
        <dbReference type="EC" id="5.6.2.4"/>
    </reaction>
</comment>
<comment type="subunit">
    <text evidence="1">Monomer.</text>
</comment>
<comment type="similarity">
    <text evidence="1">Belongs to the helicase family. Hel308 subfamily.</text>
</comment>